<feature type="chain" id="PRO_0000445229" description="R-linalool synthase">
    <location>
        <begin position="1"/>
        <end position="329"/>
    </location>
</feature>
<feature type="short sequence motif" description="DDXXD motif" evidence="5">
    <location>
        <begin position="79"/>
        <end position="83"/>
    </location>
</feature>
<feature type="short sequence motif" description="NXXXSXXXD motif" evidence="5">
    <location>
        <begin position="218"/>
        <end position="226"/>
    </location>
</feature>
<feature type="binding site" evidence="2 8">
    <location>
        <position position="79"/>
    </location>
    <ligand>
        <name>Mg(2+)</name>
        <dbReference type="ChEBI" id="CHEBI:18420"/>
        <label>1</label>
    </ligand>
</feature>
<feature type="binding site" evidence="2 8">
    <location>
        <position position="79"/>
    </location>
    <ligand>
        <name>Mg(2+)</name>
        <dbReference type="ChEBI" id="CHEBI:18420"/>
        <label>2</label>
    </ligand>
</feature>
<feature type="binding site" evidence="1">
    <location>
        <position position="172"/>
    </location>
    <ligand>
        <name>substrate</name>
    </ligand>
</feature>
<feature type="binding site" evidence="1">
    <location>
        <position position="218"/>
    </location>
    <ligand>
        <name>Mg(2+)</name>
        <dbReference type="ChEBI" id="CHEBI:18420"/>
        <label>3</label>
    </ligand>
</feature>
<feature type="binding site" evidence="1">
    <location>
        <position position="222"/>
    </location>
    <ligand>
        <name>Mg(2+)</name>
        <dbReference type="ChEBI" id="CHEBI:18420"/>
        <label>3</label>
    </ligand>
</feature>
<feature type="binding site" evidence="2 8">
    <location>
        <position position="225"/>
    </location>
    <ligand>
        <name>substrate</name>
    </ligand>
</feature>
<feature type="binding site" evidence="1">
    <location>
        <position position="226"/>
    </location>
    <ligand>
        <name>Mg(2+)</name>
        <dbReference type="ChEBI" id="CHEBI:18420"/>
        <label>3</label>
    </ligand>
</feature>
<feature type="binding site" evidence="1">
    <location>
        <begin position="308"/>
        <end position="309"/>
    </location>
    <ligand>
        <name>substrate</name>
    </ligand>
</feature>
<feature type="helix" evidence="10">
    <location>
        <begin position="18"/>
        <end position="31"/>
    </location>
</feature>
<feature type="helix" evidence="10">
    <location>
        <begin position="38"/>
        <end position="47"/>
    </location>
</feature>
<feature type="helix" evidence="10">
    <location>
        <begin position="49"/>
        <end position="51"/>
    </location>
</feature>
<feature type="helix" evidence="10">
    <location>
        <begin position="52"/>
        <end position="56"/>
    </location>
</feature>
<feature type="helix" evidence="10">
    <location>
        <begin position="62"/>
        <end position="82"/>
    </location>
</feature>
<feature type="helix" evidence="10">
    <location>
        <begin position="89"/>
        <end position="105"/>
    </location>
</feature>
<feature type="strand" evidence="9">
    <location>
        <begin position="111"/>
        <end position="113"/>
    </location>
</feature>
<feature type="helix" evidence="10">
    <location>
        <begin position="115"/>
        <end position="128"/>
    </location>
</feature>
<feature type="helix" evidence="10">
    <location>
        <begin position="133"/>
        <end position="147"/>
    </location>
</feature>
<feature type="helix" evidence="10">
    <location>
        <begin position="149"/>
        <end position="159"/>
    </location>
</feature>
<feature type="helix" evidence="10">
    <location>
        <begin position="165"/>
        <end position="175"/>
    </location>
</feature>
<feature type="helix" evidence="10">
    <location>
        <begin position="178"/>
        <end position="189"/>
    </location>
</feature>
<feature type="helix" evidence="10">
    <location>
        <begin position="195"/>
        <end position="198"/>
    </location>
</feature>
<feature type="helix" evidence="10">
    <location>
        <begin position="201"/>
        <end position="228"/>
    </location>
</feature>
<feature type="helix" evidence="10">
    <location>
        <begin position="234"/>
        <end position="242"/>
    </location>
</feature>
<feature type="helix" evidence="10">
    <location>
        <begin position="246"/>
        <end position="269"/>
    </location>
</feature>
<feature type="helix" evidence="10">
    <location>
        <begin position="271"/>
        <end position="278"/>
    </location>
</feature>
<feature type="helix" evidence="10">
    <location>
        <begin position="282"/>
        <end position="303"/>
    </location>
</feature>
<keyword id="KW-0002">3D-structure</keyword>
<keyword id="KW-0456">Lyase</keyword>
<keyword id="KW-0460">Magnesium</keyword>
<keyword id="KW-0479">Metal-binding</keyword>
<keyword id="KW-0614">Plasmid</keyword>
<keyword id="KW-1185">Reference proteome</keyword>
<dbReference type="EC" id="4.2.3.26" evidence="2"/>
<dbReference type="EMBL" id="CM000914">
    <property type="protein sequence ID" value="EFG04671.2"/>
    <property type="molecule type" value="Genomic_DNA"/>
</dbReference>
<dbReference type="RefSeq" id="WP_003963519.1">
    <property type="nucleotide sequence ID" value="NZ_CM000914.1"/>
</dbReference>
<dbReference type="PDB" id="5NX4">
    <property type="method" value="X-ray"/>
    <property type="resolution" value="2.38 A"/>
    <property type="chains" value="A/B=1-329"/>
</dbReference>
<dbReference type="PDB" id="5NX5">
    <property type="method" value="X-ray"/>
    <property type="resolution" value="1.82 A"/>
    <property type="chains" value="A/B=1-329"/>
</dbReference>
<dbReference type="PDBsum" id="5NX4"/>
<dbReference type="PDBsum" id="5NX5"/>
<dbReference type="SMR" id="D5SL78"/>
<dbReference type="GeneID" id="93734262"/>
<dbReference type="KEGG" id="sclf:BB341_30005"/>
<dbReference type="eggNOG" id="COG2124">
    <property type="taxonomic scope" value="Bacteria"/>
</dbReference>
<dbReference type="OrthoDB" id="3676909at2"/>
<dbReference type="Proteomes" id="UP000002357">
    <property type="component" value="Plasmid pSCL4"/>
</dbReference>
<dbReference type="GO" id="GO:0000287">
    <property type="term" value="F:magnesium ion binding"/>
    <property type="evidence" value="ECO:0000314"/>
    <property type="project" value="UniProtKB"/>
</dbReference>
<dbReference type="GO" id="GO:0034008">
    <property type="term" value="F:R-linalool synthase activity"/>
    <property type="evidence" value="ECO:0000314"/>
    <property type="project" value="UniProtKB"/>
</dbReference>
<dbReference type="GO" id="GO:0010333">
    <property type="term" value="F:terpene synthase activity"/>
    <property type="evidence" value="ECO:0007669"/>
    <property type="project" value="InterPro"/>
</dbReference>
<dbReference type="GO" id="GO:0045338">
    <property type="term" value="P:farnesyl diphosphate metabolic process"/>
    <property type="evidence" value="ECO:0000314"/>
    <property type="project" value="UniProtKB"/>
</dbReference>
<dbReference type="GO" id="GO:0033383">
    <property type="term" value="P:geranyl diphosphate metabolic process"/>
    <property type="evidence" value="ECO:0000314"/>
    <property type="project" value="UniProtKB"/>
</dbReference>
<dbReference type="FunFam" id="1.10.600.10:FF:000044">
    <property type="entry name" value="(2Z,6E)-hedycaryol synthase"/>
    <property type="match status" value="1"/>
</dbReference>
<dbReference type="Gene3D" id="1.10.600.10">
    <property type="entry name" value="Farnesyl Diphosphate Synthase"/>
    <property type="match status" value="1"/>
</dbReference>
<dbReference type="InterPro" id="IPR008949">
    <property type="entry name" value="Isoprenoid_synthase_dom_sf"/>
</dbReference>
<dbReference type="InterPro" id="IPR034686">
    <property type="entry name" value="Terpene_cyclase-like_2"/>
</dbReference>
<dbReference type="Pfam" id="PF19086">
    <property type="entry name" value="Terpene_syn_C_2"/>
    <property type="match status" value="1"/>
</dbReference>
<dbReference type="SFLD" id="SFLDS00005">
    <property type="entry name" value="Isoprenoid_Synthase_Type_I"/>
    <property type="match status" value="1"/>
</dbReference>
<dbReference type="SFLD" id="SFLDG01020">
    <property type="entry name" value="Terpene_Cyclase_Like_2"/>
    <property type="match status" value="1"/>
</dbReference>
<dbReference type="SUPFAM" id="SSF48576">
    <property type="entry name" value="Terpenoid synthases"/>
    <property type="match status" value="1"/>
</dbReference>
<comment type="function">
    <text evidence="2">In vitro, catalyzes the formation of R-linalool from geranyl diphosphate (GPP). Can also accept farnesyl diphosphate (FPP) as substrate to produce trans-nerolidol.</text>
</comment>
<comment type="catalytic activity">
    <reaction evidence="2">
        <text>(2E)-geranyl diphosphate + H2O = (R)-linalool + diphosphate</text>
        <dbReference type="Rhea" id="RHEA:15809"/>
        <dbReference type="ChEBI" id="CHEBI:28"/>
        <dbReference type="ChEBI" id="CHEBI:15377"/>
        <dbReference type="ChEBI" id="CHEBI:33019"/>
        <dbReference type="ChEBI" id="CHEBI:58057"/>
        <dbReference type="EC" id="4.2.3.26"/>
    </reaction>
</comment>
<comment type="catalytic activity">
    <reaction evidence="2">
        <text>(2E,6E)-farnesyl diphosphate + H2O = (6E)-nerolidol + diphosphate</text>
        <dbReference type="Rhea" id="RHEA:56984"/>
        <dbReference type="ChEBI" id="CHEBI:15377"/>
        <dbReference type="ChEBI" id="CHEBI:33019"/>
        <dbReference type="ChEBI" id="CHEBI:141283"/>
        <dbReference type="ChEBI" id="CHEBI:175763"/>
    </reaction>
</comment>
<comment type="cofactor">
    <cofactor evidence="2">
        <name>Mg(2+)</name>
        <dbReference type="ChEBI" id="CHEBI:18420"/>
    </cofactor>
    <text evidence="1">Binds 3 Mg(2+) ions per subunit.</text>
</comment>
<comment type="subunit">
    <text evidence="2">Homodimer.</text>
</comment>
<comment type="domain">
    <text evidence="5">The Asp-Asp-Xaa-Xaa-Asp (DDXXD) and Asn-Xaa-Xaa-Xaa-Ser-Xaa-Xaa-Xaa-Asp (NSD) motifs are important for the catalytic activity, presumably through binding to Mg(2+).</text>
</comment>
<comment type="similarity">
    <text evidence="4">Belongs to the terpene synthase family.</text>
</comment>
<geneLocation type="plasmid" evidence="6 7">
    <name>pSCL4</name>
</geneLocation>
<name>LNSA_STRCL</name>
<organism>
    <name type="scientific">Streptomyces clavuligerus</name>
    <dbReference type="NCBI Taxonomy" id="1901"/>
    <lineage>
        <taxon>Bacteria</taxon>
        <taxon>Bacillati</taxon>
        <taxon>Actinomycetota</taxon>
        <taxon>Actinomycetes</taxon>
        <taxon>Kitasatosporales</taxon>
        <taxon>Streptomycetaceae</taxon>
        <taxon>Streptomyces</taxon>
    </lineage>
</organism>
<gene>
    <name evidence="6" type="ORF">SCLAV_p1185</name>
</gene>
<proteinExistence type="evidence at protein level"/>
<reference key="1">
    <citation type="journal article" date="2010" name="Genome Biol. Evol.">
        <title>The sequence of a 1.8-mb bacterial linear plasmid reveals a rich evolutionary reservoir of secondary metabolic pathways.</title>
        <authorList>
            <person name="Medema M.H."/>
            <person name="Trefzer A."/>
            <person name="Kovalchuk A."/>
            <person name="van den Berg M."/>
            <person name="Mueller U."/>
            <person name="Heijne W."/>
            <person name="Wu L."/>
            <person name="Alam M.T."/>
            <person name="Ronning C.M."/>
            <person name="Nierman W.C."/>
            <person name="Bovenberg R.A.L."/>
            <person name="Breitling R."/>
            <person name="Takano E."/>
        </authorList>
    </citation>
    <scope>NUCLEOTIDE SEQUENCE [LARGE SCALE GENOMIC DNA]</scope>
    <source>
        <strain evidence="7">ATCC 27064 / DSM 738 / JCM 4710 / NBRC 13307 / NCIMB 12785 / NRRL 3585 / VKM Ac-602</strain>
    </source>
</reference>
<reference key="2">
    <citation type="journal article" date="2017" name="ACS Catal.">
        <title>Structural basis of catalysis in the bacterial monoterpene synthases linalool synthase and 1,8-cineole synthase.</title>
        <authorList>
            <person name="Karuppiah V."/>
            <person name="Ranaghan K.E."/>
            <person name="Leferink N.G.H."/>
            <person name="Johannissen L.O."/>
            <person name="Shanmugam M."/>
            <person name="Cheallaigh A.N."/>
            <person name="Bennett N.J."/>
            <person name="Kearset L.J."/>
            <person name="Takano E."/>
            <person name="Gardiner J.M."/>
            <person name="van der Kamp M.W."/>
            <person name="Hay S."/>
            <person name="Mulholland A.J."/>
            <person name="Leys D."/>
            <person name="Scrutton N.S."/>
        </authorList>
    </citation>
    <scope>X-RAY CRYSTALLOGRAPHY (1.82 ANGSTROMS)</scope>
    <scope>FUNCTION</scope>
    <scope>CATALYTIC ACTIVITY</scope>
    <scope>COFACTOR</scope>
    <scope>SUBSTRATE SPECIFICITY</scope>
    <scope>DOMAIN</scope>
    <scope>SUBUNIT</scope>
    <source>
        <strain>ATCC 27064 / DSM 738 / JCM 4710 / NBRC 13307 / NCIMB 12785 / NRRL 3585 / VKM Ac-602</strain>
    </source>
</reference>
<sequence>MQEFEFAVPAPSRVSPDLARARARHLDWVHAMDLVRGEEARRRYEFSCVADIGAYGYPHATGADLDLCVDVLGWTFLFDDQFDAGDGRERDALAVCAELTDLLWKGTAATAASPPIVVAFSDCWERMRAGMSDAWRRRTVHEWVDYLAGWPTKLADRAHGAVLDPAAHLRARHRTICCRPLFALAERVGGYEVPRRAWHSSRLDGMRFTTSDAVIGMNELHSFEKDRAQGHANLVLSLVHHGGLTGPEAVTRVCDLVQGSIESFLRLRSGLPELGRALGVEGAVLDRYADALSAFCRGYHDWGRGASRYTTRDHPGDLGLENLVARSSG</sequence>
<evidence type="ECO:0000250" key="1">
    <source>
        <dbReference type="UniProtKB" id="B5GMG2"/>
    </source>
</evidence>
<evidence type="ECO:0000269" key="2">
    <source>
    </source>
</evidence>
<evidence type="ECO:0000303" key="3">
    <source>
    </source>
</evidence>
<evidence type="ECO:0000305" key="4"/>
<evidence type="ECO:0000305" key="5">
    <source>
    </source>
</evidence>
<evidence type="ECO:0000312" key="6">
    <source>
        <dbReference type="EMBL" id="EFG04671.2"/>
    </source>
</evidence>
<evidence type="ECO:0000312" key="7">
    <source>
        <dbReference type="Proteomes" id="UP000002357"/>
    </source>
</evidence>
<evidence type="ECO:0007744" key="8">
    <source>
        <dbReference type="PDB" id="5NX5"/>
    </source>
</evidence>
<evidence type="ECO:0007829" key="9">
    <source>
        <dbReference type="PDB" id="5NX4"/>
    </source>
</evidence>
<evidence type="ECO:0007829" key="10">
    <source>
        <dbReference type="PDB" id="5NX5"/>
    </source>
</evidence>
<protein>
    <recommendedName>
        <fullName evidence="3">R-linalool synthase</fullName>
        <shortName evidence="3">bLinS</shortName>
        <ecNumber evidence="2">4.2.3.26</ecNumber>
    </recommendedName>
    <alternativeName>
        <fullName evidence="3">Monoterpene synthase</fullName>
    </alternativeName>
    <alternativeName>
        <fullName evidence="3">Sesquiterpene synthase</fullName>
    </alternativeName>
</protein>
<accession>D5SL78</accession>